<comment type="function">
    <text evidence="1">Alpha toxins bind voltage-independently at site-3 of sodium channels (Nav) and inhibit the inactivation of the activated channels, thereby blocking neuronal transmission.</text>
</comment>
<comment type="subcellular location">
    <subcellularLocation>
        <location evidence="1">Secreted</location>
    </subcellularLocation>
</comment>
<comment type="tissue specificity">
    <text>Expressed by the venom gland.</text>
</comment>
<comment type="domain">
    <text evidence="3">Has the structural arrangement of an alpha-helix connected to antiparallel beta-sheets by disulfide bonds (CS-alpha/beta).</text>
</comment>
<comment type="similarity">
    <text evidence="3">Belongs to the long (4 C-C) scorpion toxin superfamily. Sodium channel inhibitor family. Alpha subfamily.</text>
</comment>
<proteinExistence type="evidence at transcript level"/>
<organism>
    <name type="scientific">Olivierus martensii</name>
    <name type="common">Manchurian scorpion</name>
    <name type="synonym">Mesobuthus martensii</name>
    <dbReference type="NCBI Taxonomy" id="34649"/>
    <lineage>
        <taxon>Eukaryota</taxon>
        <taxon>Metazoa</taxon>
        <taxon>Ecdysozoa</taxon>
        <taxon>Arthropoda</taxon>
        <taxon>Chelicerata</taxon>
        <taxon>Arachnida</taxon>
        <taxon>Scorpiones</taxon>
        <taxon>Buthida</taxon>
        <taxon>Buthoidea</taxon>
        <taxon>Buthidae</taxon>
        <taxon>Olivierus</taxon>
    </lineage>
</organism>
<evidence type="ECO:0000250" key="1"/>
<evidence type="ECO:0000255" key="2">
    <source>
        <dbReference type="PROSITE-ProRule" id="PRU01210"/>
    </source>
</evidence>
<evidence type="ECO:0000305" key="3"/>
<name>SC15_OLIMR</name>
<protein>
    <recommendedName>
        <fullName>Toxin BmKaTX15</fullName>
    </recommendedName>
    <alternativeName>
        <fullName>Alpha-neurotoxin Tx15</fullName>
    </alternativeName>
    <alternativeName>
        <fullName>BmKalphaTx15</fullName>
    </alternativeName>
    <alternativeName>
        <fullName>KTc</fullName>
    </alternativeName>
    <alternativeName>
        <fullName>Na+ channel toxin BmKT'</fullName>
    </alternativeName>
</protein>
<accession>Q9GNG8</accession>
<accession>Q1H5L1</accession>
<feature type="signal peptide" evidence="1">
    <location>
        <begin position="1"/>
        <end position="19"/>
    </location>
</feature>
<feature type="chain" id="PRO_0000035250" description="Toxin BmKaTX15">
    <location>
        <begin position="20"/>
        <end position="85"/>
    </location>
</feature>
<feature type="domain" description="LCN-type CS-alpha/beta" evidence="2">
    <location>
        <begin position="21"/>
        <end position="83"/>
    </location>
</feature>
<feature type="disulfide bond" evidence="2">
    <location>
        <begin position="31"/>
        <end position="82"/>
    </location>
</feature>
<feature type="disulfide bond" evidence="2">
    <location>
        <begin position="35"/>
        <end position="55"/>
    </location>
</feature>
<feature type="disulfide bond" evidence="2">
    <location>
        <begin position="41"/>
        <end position="65"/>
    </location>
</feature>
<feature type="disulfide bond" evidence="2">
    <location>
        <begin position="45"/>
        <end position="67"/>
    </location>
</feature>
<sequence length="85" mass="9398">MNYLVFFSLALLVMTGVESVRDGYIADDKNCAYFCGRNAYCDDECKKNGAESGYCQWAGVYGNACWCYKLPDKVPIRVPGKCNGG</sequence>
<reference key="1">
    <citation type="journal article" date="2000" name="Toxicon">
        <title>Nine novel precursors of Buthus martensii scorpion alpha-toxin homologues.</title>
        <authorList>
            <person name="Zhu S.-Y."/>
            <person name="Li W.-X."/>
            <person name="Zeng X.-C."/>
            <person name="Liu H."/>
            <person name="Jiang D.-H."/>
            <person name="Mao X."/>
        </authorList>
    </citation>
    <scope>NUCLEOTIDE SEQUENCE [MRNA]</scope>
    <source>
        <tissue>Venom gland</tissue>
    </source>
</reference>
<reference key="2">
    <citation type="journal article" date="2006" name="Peptides">
        <title>Characterization of a novel cDNA encoding a short venom peptide derived from venom gland of scorpion Buthus martensii Karsch: trans-splicing may play an important role in the diversification of scorpion venom peptides.</title>
        <authorList>
            <person name="Zeng X.C."/>
            <person name="Luo F."/>
            <person name="Li W.X."/>
        </authorList>
    </citation>
    <scope>NUCLEOTIDE SEQUENCE [GENOMIC DNA]</scope>
</reference>
<dbReference type="EMBL" id="AF163017">
    <property type="protein sequence ID" value="AAG39643.1"/>
    <property type="molecule type" value="mRNA"/>
</dbReference>
<dbReference type="EMBL" id="AF163016">
    <property type="protein sequence ID" value="AAG39642.1"/>
    <property type="molecule type" value="mRNA"/>
</dbReference>
<dbReference type="EMBL" id="AY786186">
    <property type="protein sequence ID" value="AAX11389.1"/>
    <property type="molecule type" value="Genomic_DNA"/>
</dbReference>
<dbReference type="SMR" id="Q9GNG8"/>
<dbReference type="GO" id="GO:0005576">
    <property type="term" value="C:extracellular region"/>
    <property type="evidence" value="ECO:0007669"/>
    <property type="project" value="UniProtKB-SubCell"/>
</dbReference>
<dbReference type="GO" id="GO:0019871">
    <property type="term" value="F:sodium channel inhibitor activity"/>
    <property type="evidence" value="ECO:0007669"/>
    <property type="project" value="InterPro"/>
</dbReference>
<dbReference type="GO" id="GO:0090729">
    <property type="term" value="F:toxin activity"/>
    <property type="evidence" value="ECO:0007669"/>
    <property type="project" value="UniProtKB-KW"/>
</dbReference>
<dbReference type="GO" id="GO:0006952">
    <property type="term" value="P:defense response"/>
    <property type="evidence" value="ECO:0007669"/>
    <property type="project" value="InterPro"/>
</dbReference>
<dbReference type="CDD" id="cd23106">
    <property type="entry name" value="neurotoxins_LC_scorpion"/>
    <property type="match status" value="1"/>
</dbReference>
<dbReference type="FunFam" id="3.30.30.10:FF:000002">
    <property type="entry name" value="Alpha-like toxin BmK-M1"/>
    <property type="match status" value="1"/>
</dbReference>
<dbReference type="Gene3D" id="3.30.30.10">
    <property type="entry name" value="Knottin, scorpion toxin-like"/>
    <property type="match status" value="1"/>
</dbReference>
<dbReference type="InterPro" id="IPR044062">
    <property type="entry name" value="LCN-type_CS_alpha_beta_dom"/>
</dbReference>
<dbReference type="InterPro" id="IPR003614">
    <property type="entry name" value="Scorpion_toxin-like"/>
</dbReference>
<dbReference type="InterPro" id="IPR036574">
    <property type="entry name" value="Scorpion_toxin-like_sf"/>
</dbReference>
<dbReference type="InterPro" id="IPR018218">
    <property type="entry name" value="Scorpion_toxinL"/>
</dbReference>
<dbReference type="InterPro" id="IPR002061">
    <property type="entry name" value="Scorpion_toxinL/defensin"/>
</dbReference>
<dbReference type="Pfam" id="PF00537">
    <property type="entry name" value="Toxin_3"/>
    <property type="match status" value="1"/>
</dbReference>
<dbReference type="PRINTS" id="PR00285">
    <property type="entry name" value="SCORPNTOXIN"/>
</dbReference>
<dbReference type="PRINTS" id="PR00284">
    <property type="entry name" value="TOXIN"/>
</dbReference>
<dbReference type="SMART" id="SM00505">
    <property type="entry name" value="Knot1"/>
    <property type="match status" value="1"/>
</dbReference>
<dbReference type="SUPFAM" id="SSF57095">
    <property type="entry name" value="Scorpion toxin-like"/>
    <property type="match status" value="1"/>
</dbReference>
<dbReference type="PROSITE" id="PS51863">
    <property type="entry name" value="LCN_CSAB"/>
    <property type="match status" value="1"/>
</dbReference>
<keyword id="KW-1015">Disulfide bond</keyword>
<keyword id="KW-0872">Ion channel impairing toxin</keyword>
<keyword id="KW-0528">Neurotoxin</keyword>
<keyword id="KW-0964">Secreted</keyword>
<keyword id="KW-0732">Signal</keyword>
<keyword id="KW-0800">Toxin</keyword>
<keyword id="KW-0738">Voltage-gated sodium channel impairing toxin</keyword>